<accession>A5GMV6</accession>
<comment type="function">
    <text evidence="1">May help in the organization of the PsaE and PsaF subunits.</text>
</comment>
<comment type="subcellular location">
    <subcellularLocation>
        <location evidence="1">Cellular thylakoid membrane</location>
        <topology evidence="1">Single-pass membrane protein</topology>
    </subcellularLocation>
</comment>
<comment type="similarity">
    <text evidence="1">Belongs to the PsaJ family.</text>
</comment>
<proteinExistence type="inferred from homology"/>
<protein>
    <recommendedName>
        <fullName evidence="1">Photosystem I reaction center subunit IX</fullName>
    </recommendedName>
</protein>
<name>PSAJ_SYNPW</name>
<sequence>MQKFLTTAPVVAAIWFTLTAGILIEWNRFFPDLLFHP</sequence>
<organism>
    <name type="scientific">Synechococcus sp. (strain WH7803)</name>
    <dbReference type="NCBI Taxonomy" id="32051"/>
    <lineage>
        <taxon>Bacteria</taxon>
        <taxon>Bacillati</taxon>
        <taxon>Cyanobacteriota</taxon>
        <taxon>Cyanophyceae</taxon>
        <taxon>Synechococcales</taxon>
        <taxon>Synechococcaceae</taxon>
        <taxon>Synechococcus</taxon>
    </lineage>
</organism>
<feature type="chain" id="PRO_0000354123" description="Photosystem I reaction center subunit IX">
    <location>
        <begin position="1"/>
        <end position="37"/>
    </location>
</feature>
<feature type="transmembrane region" description="Helical" evidence="1">
    <location>
        <begin position="4"/>
        <end position="24"/>
    </location>
</feature>
<reference key="1">
    <citation type="submission" date="2006-05" db="EMBL/GenBank/DDBJ databases">
        <authorList>
            <consortium name="Genoscope"/>
        </authorList>
    </citation>
    <scope>NUCLEOTIDE SEQUENCE [LARGE SCALE GENOMIC DNA]</scope>
    <source>
        <strain>WH7803</strain>
    </source>
</reference>
<keyword id="KW-0472">Membrane</keyword>
<keyword id="KW-0602">Photosynthesis</keyword>
<keyword id="KW-0603">Photosystem I</keyword>
<keyword id="KW-1185">Reference proteome</keyword>
<keyword id="KW-0793">Thylakoid</keyword>
<keyword id="KW-0812">Transmembrane</keyword>
<keyword id="KW-1133">Transmembrane helix</keyword>
<dbReference type="EMBL" id="CT971583">
    <property type="protein sequence ID" value="CAK24271.1"/>
    <property type="molecule type" value="Genomic_DNA"/>
</dbReference>
<dbReference type="SMR" id="A5GMV6"/>
<dbReference type="STRING" id="32051.SynWH7803_1845"/>
<dbReference type="KEGG" id="syx:SynWH7803_1845"/>
<dbReference type="eggNOG" id="ENOG5033A5A">
    <property type="taxonomic scope" value="Bacteria"/>
</dbReference>
<dbReference type="HOGENOM" id="CLU_212133_1_1_3"/>
<dbReference type="OrthoDB" id="532702at2"/>
<dbReference type="Proteomes" id="UP000001566">
    <property type="component" value="Chromosome"/>
</dbReference>
<dbReference type="GO" id="GO:0009522">
    <property type="term" value="C:photosystem I"/>
    <property type="evidence" value="ECO:0007669"/>
    <property type="project" value="UniProtKB-KW"/>
</dbReference>
<dbReference type="GO" id="GO:0031676">
    <property type="term" value="C:plasma membrane-derived thylakoid membrane"/>
    <property type="evidence" value="ECO:0007669"/>
    <property type="project" value="UniProtKB-SubCell"/>
</dbReference>
<dbReference type="GO" id="GO:0015979">
    <property type="term" value="P:photosynthesis"/>
    <property type="evidence" value="ECO:0007669"/>
    <property type="project" value="UniProtKB-UniRule"/>
</dbReference>
<dbReference type="Gene3D" id="1.20.5.510">
    <property type="entry name" value="Single helix bin"/>
    <property type="match status" value="1"/>
</dbReference>
<dbReference type="HAMAP" id="MF_00522">
    <property type="entry name" value="PSI_PsaJ"/>
    <property type="match status" value="1"/>
</dbReference>
<dbReference type="InterPro" id="IPR002615">
    <property type="entry name" value="PSI_PsaJ"/>
</dbReference>
<dbReference type="InterPro" id="IPR036062">
    <property type="entry name" value="PSI_PsaJ_sf"/>
</dbReference>
<dbReference type="NCBIfam" id="NF002743">
    <property type="entry name" value="PRK02733.1"/>
    <property type="match status" value="1"/>
</dbReference>
<dbReference type="PANTHER" id="PTHR36082">
    <property type="match status" value="1"/>
</dbReference>
<dbReference type="PANTHER" id="PTHR36082:SF2">
    <property type="entry name" value="PHOTOSYSTEM I REACTION CENTER SUBUNIT IX"/>
    <property type="match status" value="1"/>
</dbReference>
<dbReference type="Pfam" id="PF01701">
    <property type="entry name" value="PSI_PsaJ"/>
    <property type="match status" value="1"/>
</dbReference>
<dbReference type="SUPFAM" id="SSF81544">
    <property type="entry name" value="Subunit IX of photosystem I reaction centre, PsaJ"/>
    <property type="match status" value="1"/>
</dbReference>
<gene>
    <name evidence="1" type="primary">psaJ</name>
    <name type="ordered locus">SynWH7803_1845</name>
</gene>
<evidence type="ECO:0000255" key="1">
    <source>
        <dbReference type="HAMAP-Rule" id="MF_00522"/>
    </source>
</evidence>